<sequence length="571" mass="64566">MTLSPEDLKTIEKYALQNAVKYEKAPQSKAVMGKVMGECPQLRANPGAVSTALKSIVSEIAKGNPEAWKTRLSEIAPELIEALNVKKEPEKGLKPLEGAEPGKVVMRFAPNPNGPGTLGSARGMVVNSEYVKMYKGKFVLRFDDTDPDIKRPMLEAYDWYLDDFKWLGVVPDRVVYASDHFPIYYDYARKLIEMGKAYVCFCKGEDFKRLKDAKQACPHRDTSPEENLMHWEKMLAGEYEDQQAVLRIKTDIEHKDPALRDWGAFRIRKMSHPRAEIGNKYVVWPLLDFAGAIEDHELGMTHIIRGKDLIDSEKRQGYIYKYFGWTYPKTTHWGRVKIHEFGKFSTSSLRKAIEAGEYSGWDDPRLPTIRAIRRRGIQAEALKKFMIEMGVGMTDVSISMESLYAENRKIVDPVANRYFFVWAPVELEIAGMEPTVAKLPLHPTDHSRGVREIAVGNKVLVCAEDVEKLELGSVIRLKDFCNIEITSLSPLQAKHSDVSLEALKKAKAKIVHWAPVDGISVKVRGPEGDLEGIGEKGIVGELDKIVQFERFGFCRIDAVSEEKVVAYFAHK</sequence>
<gene>
    <name evidence="1" type="primary">gltX</name>
    <name type="ordered locus">MA_0587</name>
</gene>
<organism>
    <name type="scientific">Methanosarcina acetivorans (strain ATCC 35395 / DSM 2834 / JCM 12185 / C2A)</name>
    <dbReference type="NCBI Taxonomy" id="188937"/>
    <lineage>
        <taxon>Archaea</taxon>
        <taxon>Methanobacteriati</taxon>
        <taxon>Methanobacteriota</taxon>
        <taxon>Stenosarchaea group</taxon>
        <taxon>Methanomicrobia</taxon>
        <taxon>Methanosarcinales</taxon>
        <taxon>Methanosarcinaceae</taxon>
        <taxon>Methanosarcina</taxon>
    </lineage>
</organism>
<name>SYE_METAC</name>
<feature type="chain" id="PRO_0000119716" description="Glutamate--tRNA ligase">
    <location>
        <begin position="1"/>
        <end position="571"/>
    </location>
</feature>
<feature type="short sequence motif" description="'HIGH' region" evidence="1">
    <location>
        <begin position="110"/>
        <end position="120"/>
    </location>
</feature>
<dbReference type="EC" id="6.1.1.17" evidence="1"/>
<dbReference type="EMBL" id="AE010299">
    <property type="protein sequence ID" value="AAM04031.1"/>
    <property type="status" value="ALT_INIT"/>
    <property type="molecule type" value="Genomic_DNA"/>
</dbReference>
<dbReference type="RefSeq" id="WP_048064918.1">
    <property type="nucleotide sequence ID" value="NC_003552.1"/>
</dbReference>
<dbReference type="SMR" id="Q8TT52"/>
<dbReference type="FunCoup" id="Q8TT52">
    <property type="interactions" value="308"/>
</dbReference>
<dbReference type="STRING" id="188937.MA_0587"/>
<dbReference type="EnsemblBacteria" id="AAM04031">
    <property type="protein sequence ID" value="AAM04031"/>
    <property type="gene ID" value="MA_0587"/>
</dbReference>
<dbReference type="GeneID" id="1472479"/>
<dbReference type="KEGG" id="mac:MA_0587"/>
<dbReference type="HOGENOM" id="CLU_001882_1_3_2"/>
<dbReference type="InParanoid" id="Q8TT52"/>
<dbReference type="OrthoDB" id="10470at2157"/>
<dbReference type="PhylomeDB" id="Q8TT52"/>
<dbReference type="Proteomes" id="UP000002487">
    <property type="component" value="Chromosome"/>
</dbReference>
<dbReference type="GO" id="GO:0005829">
    <property type="term" value="C:cytosol"/>
    <property type="evidence" value="ECO:0000318"/>
    <property type="project" value="GO_Central"/>
</dbReference>
<dbReference type="GO" id="GO:0005524">
    <property type="term" value="F:ATP binding"/>
    <property type="evidence" value="ECO:0007669"/>
    <property type="project" value="UniProtKB-UniRule"/>
</dbReference>
<dbReference type="GO" id="GO:0004818">
    <property type="term" value="F:glutamate-tRNA ligase activity"/>
    <property type="evidence" value="ECO:0007669"/>
    <property type="project" value="UniProtKB-UniRule"/>
</dbReference>
<dbReference type="GO" id="GO:0006424">
    <property type="term" value="P:glutamyl-tRNA aminoacylation"/>
    <property type="evidence" value="ECO:0007669"/>
    <property type="project" value="UniProtKB-UniRule"/>
</dbReference>
<dbReference type="CDD" id="cd09287">
    <property type="entry name" value="GluRS_non_core"/>
    <property type="match status" value="1"/>
</dbReference>
<dbReference type="FunFam" id="2.40.240.10:FF:000033">
    <property type="entry name" value="Glutamate--tRNA ligase"/>
    <property type="match status" value="1"/>
</dbReference>
<dbReference type="FunFam" id="3.40.50.620:FF:000222">
    <property type="entry name" value="Glutamate--tRNA ligase"/>
    <property type="match status" value="1"/>
</dbReference>
<dbReference type="Gene3D" id="2.40.240.100">
    <property type="match status" value="1"/>
</dbReference>
<dbReference type="Gene3D" id="3.40.50.620">
    <property type="entry name" value="HUPs"/>
    <property type="match status" value="1"/>
</dbReference>
<dbReference type="Gene3D" id="2.40.240.10">
    <property type="entry name" value="Ribosomal Protein L25, Chain P"/>
    <property type="match status" value="1"/>
</dbReference>
<dbReference type="HAMAP" id="MF_02076">
    <property type="entry name" value="Glu_tRNA_synth_type2"/>
    <property type="match status" value="1"/>
</dbReference>
<dbReference type="InterPro" id="IPR050132">
    <property type="entry name" value="Gln/Glu-tRNA_Ligase"/>
</dbReference>
<dbReference type="InterPro" id="IPR004526">
    <property type="entry name" value="Glu-tRNA-synth_arc/euk"/>
</dbReference>
<dbReference type="InterPro" id="IPR000924">
    <property type="entry name" value="Glu/Gln-tRNA-synth"/>
</dbReference>
<dbReference type="InterPro" id="IPR020058">
    <property type="entry name" value="Glu/Gln-tRNA-synth_Ib_cat-dom"/>
</dbReference>
<dbReference type="InterPro" id="IPR020059">
    <property type="entry name" value="Glu/Gln-tRNA-synth_Ib_codon-bd"/>
</dbReference>
<dbReference type="InterPro" id="IPR020056">
    <property type="entry name" value="Rbsml_bL25/Gln-tRNA_synth_N"/>
</dbReference>
<dbReference type="InterPro" id="IPR011035">
    <property type="entry name" value="Ribosomal_bL25/Gln-tRNA_synth"/>
</dbReference>
<dbReference type="InterPro" id="IPR014729">
    <property type="entry name" value="Rossmann-like_a/b/a_fold"/>
</dbReference>
<dbReference type="NCBIfam" id="TIGR00463">
    <property type="entry name" value="gltX_arch"/>
    <property type="match status" value="1"/>
</dbReference>
<dbReference type="NCBIfam" id="NF003169">
    <property type="entry name" value="PRK04156.1"/>
    <property type="match status" value="1"/>
</dbReference>
<dbReference type="PANTHER" id="PTHR43097:SF5">
    <property type="entry name" value="GLUTAMATE--TRNA LIGASE"/>
    <property type="match status" value="1"/>
</dbReference>
<dbReference type="PANTHER" id="PTHR43097">
    <property type="entry name" value="GLUTAMINE-TRNA LIGASE"/>
    <property type="match status" value="1"/>
</dbReference>
<dbReference type="Pfam" id="PF00749">
    <property type="entry name" value="tRNA-synt_1c"/>
    <property type="match status" value="1"/>
</dbReference>
<dbReference type="Pfam" id="PF03950">
    <property type="entry name" value="tRNA-synt_1c_C"/>
    <property type="match status" value="1"/>
</dbReference>
<dbReference type="PRINTS" id="PR00987">
    <property type="entry name" value="TRNASYNTHGLU"/>
</dbReference>
<dbReference type="SUPFAM" id="SSF52374">
    <property type="entry name" value="Nucleotidylyl transferase"/>
    <property type="match status" value="1"/>
</dbReference>
<dbReference type="SUPFAM" id="SSF50715">
    <property type="entry name" value="Ribosomal protein L25-like"/>
    <property type="match status" value="1"/>
</dbReference>
<reference key="1">
    <citation type="journal article" date="2002" name="Genome Res.">
        <title>The genome of Methanosarcina acetivorans reveals extensive metabolic and physiological diversity.</title>
        <authorList>
            <person name="Galagan J.E."/>
            <person name="Nusbaum C."/>
            <person name="Roy A."/>
            <person name="Endrizzi M.G."/>
            <person name="Macdonald P."/>
            <person name="FitzHugh W."/>
            <person name="Calvo S."/>
            <person name="Engels R."/>
            <person name="Smirnov S."/>
            <person name="Atnoor D."/>
            <person name="Brown A."/>
            <person name="Allen N."/>
            <person name="Naylor J."/>
            <person name="Stange-Thomann N."/>
            <person name="DeArellano K."/>
            <person name="Johnson R."/>
            <person name="Linton L."/>
            <person name="McEwan P."/>
            <person name="McKernan K."/>
            <person name="Talamas J."/>
            <person name="Tirrell A."/>
            <person name="Ye W."/>
            <person name="Zimmer A."/>
            <person name="Barber R.D."/>
            <person name="Cann I."/>
            <person name="Graham D.E."/>
            <person name="Grahame D.A."/>
            <person name="Guss A.M."/>
            <person name="Hedderich R."/>
            <person name="Ingram-Smith C."/>
            <person name="Kuettner H.C."/>
            <person name="Krzycki J.A."/>
            <person name="Leigh J.A."/>
            <person name="Li W."/>
            <person name="Liu J."/>
            <person name="Mukhopadhyay B."/>
            <person name="Reeve J.N."/>
            <person name="Smith K."/>
            <person name="Springer T.A."/>
            <person name="Umayam L.A."/>
            <person name="White O."/>
            <person name="White R.H."/>
            <person name="de Macario E.C."/>
            <person name="Ferry J.G."/>
            <person name="Jarrell K.F."/>
            <person name="Jing H."/>
            <person name="Macario A.J.L."/>
            <person name="Paulsen I.T."/>
            <person name="Pritchett M."/>
            <person name="Sowers K.R."/>
            <person name="Swanson R.V."/>
            <person name="Zinder S.H."/>
            <person name="Lander E."/>
            <person name="Metcalf W.W."/>
            <person name="Birren B."/>
        </authorList>
    </citation>
    <scope>NUCLEOTIDE SEQUENCE [LARGE SCALE GENOMIC DNA]</scope>
    <source>
        <strain>ATCC 35395 / DSM 2834 / JCM 12185 / C2A</strain>
    </source>
</reference>
<keyword id="KW-0030">Aminoacyl-tRNA synthetase</keyword>
<keyword id="KW-0067">ATP-binding</keyword>
<keyword id="KW-0963">Cytoplasm</keyword>
<keyword id="KW-0436">Ligase</keyword>
<keyword id="KW-0547">Nucleotide-binding</keyword>
<keyword id="KW-0648">Protein biosynthesis</keyword>
<keyword id="KW-1185">Reference proteome</keyword>
<comment type="function">
    <text evidence="1">Catalyzes the attachment of glutamate to tRNA(Glu) in a two-step reaction: glutamate is first activated by ATP to form Glu-AMP and then transferred to the acceptor end of tRNA(Glu).</text>
</comment>
<comment type="catalytic activity">
    <reaction evidence="1">
        <text>tRNA(Glu) + L-glutamate + ATP = L-glutamyl-tRNA(Glu) + AMP + diphosphate</text>
        <dbReference type="Rhea" id="RHEA:23540"/>
        <dbReference type="Rhea" id="RHEA-COMP:9663"/>
        <dbReference type="Rhea" id="RHEA-COMP:9680"/>
        <dbReference type="ChEBI" id="CHEBI:29985"/>
        <dbReference type="ChEBI" id="CHEBI:30616"/>
        <dbReference type="ChEBI" id="CHEBI:33019"/>
        <dbReference type="ChEBI" id="CHEBI:78442"/>
        <dbReference type="ChEBI" id="CHEBI:78520"/>
        <dbReference type="ChEBI" id="CHEBI:456215"/>
        <dbReference type="EC" id="6.1.1.17"/>
    </reaction>
</comment>
<comment type="subcellular location">
    <subcellularLocation>
        <location evidence="1">Cytoplasm</location>
    </subcellularLocation>
</comment>
<comment type="similarity">
    <text evidence="1">Belongs to the class-I aminoacyl-tRNA synthetase family. Glutamate--tRNA ligase type 2 subfamily.</text>
</comment>
<comment type="sequence caution" evidence="2">
    <conflict type="erroneous initiation">
        <sequence resource="EMBL-CDS" id="AAM04031"/>
    </conflict>
</comment>
<proteinExistence type="inferred from homology"/>
<evidence type="ECO:0000255" key="1">
    <source>
        <dbReference type="HAMAP-Rule" id="MF_02076"/>
    </source>
</evidence>
<evidence type="ECO:0000305" key="2"/>
<accession>Q8TT52</accession>
<protein>
    <recommendedName>
        <fullName evidence="1">Glutamate--tRNA ligase</fullName>
        <ecNumber evidence="1">6.1.1.17</ecNumber>
    </recommendedName>
    <alternativeName>
        <fullName evidence="1">Glutamyl-tRNA synthetase</fullName>
        <shortName evidence="1">GluRS</shortName>
    </alternativeName>
</protein>